<feature type="signal peptide" evidence="4">
    <location>
        <begin position="1"/>
        <end position="20"/>
    </location>
</feature>
<feature type="chain" id="PRO_0000012725" description="Endothelin-1 receptor">
    <location>
        <begin position="21"/>
        <end position="427"/>
    </location>
</feature>
<feature type="topological domain" description="Extracellular" evidence="4">
    <location>
        <begin position="21"/>
        <end position="80"/>
    </location>
</feature>
<feature type="transmembrane region" description="Helical; Name=1" evidence="4">
    <location>
        <begin position="81"/>
        <end position="102"/>
    </location>
</feature>
<feature type="topological domain" description="Cytoplasmic" evidence="4">
    <location>
        <begin position="103"/>
        <end position="112"/>
    </location>
</feature>
<feature type="transmembrane region" description="Helical; Name=2" evidence="4">
    <location>
        <begin position="113"/>
        <end position="132"/>
    </location>
</feature>
<feature type="topological domain" description="Extracellular" evidence="4">
    <location>
        <begin position="133"/>
        <end position="159"/>
    </location>
</feature>
<feature type="transmembrane region" description="Helical; Name=3" evidence="4">
    <location>
        <begin position="160"/>
        <end position="181"/>
    </location>
</feature>
<feature type="topological domain" description="Cytoplasmic" evidence="4">
    <location>
        <begin position="182"/>
        <end position="205"/>
    </location>
</feature>
<feature type="transmembrane region" description="Helical; Name=4" evidence="4">
    <location>
        <begin position="206"/>
        <end position="229"/>
    </location>
</feature>
<feature type="topological domain" description="Extracellular" evidence="4">
    <location>
        <begin position="230"/>
        <end position="256"/>
    </location>
</feature>
<feature type="transmembrane region" description="Helical; Name=5" evidence="4">
    <location>
        <begin position="257"/>
        <end position="278"/>
    </location>
</feature>
<feature type="topological domain" description="Cytoplasmic" evidence="4">
    <location>
        <begin position="279"/>
        <end position="306"/>
    </location>
</feature>
<feature type="transmembrane region" description="Helical; Name=6" evidence="4">
    <location>
        <begin position="307"/>
        <end position="328"/>
    </location>
</feature>
<feature type="topological domain" description="Extracellular" evidence="4">
    <location>
        <begin position="329"/>
        <end position="347"/>
    </location>
</feature>
<feature type="transmembrane region" description="Helical; Name=7" evidence="4">
    <location>
        <begin position="348"/>
        <end position="372"/>
    </location>
</feature>
<feature type="topological domain" description="Cytoplasmic" evidence="4">
    <location>
        <begin position="373"/>
        <end position="427"/>
    </location>
</feature>
<feature type="region of interest" description="Disordered" evidence="6">
    <location>
        <begin position="405"/>
        <end position="427"/>
    </location>
</feature>
<feature type="compositionally biased region" description="Polar residues" evidence="6">
    <location>
        <begin position="405"/>
        <end position="415"/>
    </location>
</feature>
<feature type="compositionally biased region" description="Basic and acidic residues" evidence="6">
    <location>
        <begin position="416"/>
        <end position="427"/>
    </location>
</feature>
<feature type="modified residue" description="Phosphoserine" evidence="3">
    <location>
        <position position="425"/>
    </location>
</feature>
<feature type="glycosylation site" description="N-linked (GlcNAc...) asparagine" evidence="4">
    <location>
        <position position="29"/>
    </location>
</feature>
<feature type="glycosylation site" description="N-linked (GlcNAc...) asparagine" evidence="4">
    <location>
        <position position="62"/>
    </location>
</feature>
<feature type="disulfide bond" evidence="5">
    <location>
        <begin position="158"/>
        <end position="239"/>
    </location>
</feature>
<protein>
    <recommendedName>
        <fullName evidence="7">Endothelin-1 receptor</fullName>
    </recommendedName>
    <alternativeName>
        <fullName evidence="2">Endothelin receptor type A</fullName>
        <shortName>ET-A</shortName>
        <shortName>ET-AR</shortName>
    </alternativeName>
</protein>
<proteinExistence type="evidence at transcript level"/>
<gene>
    <name evidence="2" type="primary">EDNRA</name>
</gene>
<comment type="function">
    <text evidence="1">Receptor for endothelin-1. Mediates its action by association with G proteins that activate a phosphatidylinositol-calcium second messenger system. The rank order of binding affinities for ET-A is: ET1 &gt; ET2 &gt;&gt; ET3 (By similarity).</text>
</comment>
<comment type="subunit">
    <text evidence="1">Interacts with HDAC7 and KAT5.</text>
</comment>
<comment type="subcellular location">
    <subcellularLocation>
        <location>Cell membrane</location>
        <topology>Multi-pass membrane protein</topology>
    </subcellularLocation>
</comment>
<comment type="similarity">
    <text evidence="5">Belongs to the G-protein coupled receptor 1 family. Endothelin receptor subfamily. EDNRA sub-subfamily.</text>
</comment>
<sequence>METFWLRVSFWVALVGGVISDNPESYSTNLSIHVDSVTTFRGTELSFVVTTHQPTNLALPSNGSMHNYCPQQTKITSAFKYINTVISCTIFIVGMVGNATLLRIIYQNKCMRNGPNALIASLALGDLIYVVIDLPINVFKLLAGRWPFEQNDFGVFLCKLFPFLQKSSVGITVLNLCALSVDRYRAVASWSRVQGIGIPLVTAIEIVSIWILSFILAIPEAIGFVMVPFEYKGAQHRTCMLNATSKFMEFYQDVKDWWLFGFYFCMPLVCTAIFYTLMTCEMLNRRNGSLRIALSEHLKQRREVAKTVFCLVVIFALCWFPLHLSRILKKTVYDEMDTNRCELLSFLLLMDYIGINLATMNSCINPIALYFVSKKFKNCFQSCLCCCCYQSKSLMTSVPMNGTSIQWKNPEQNNHNTERSSHKDSIN</sequence>
<keyword id="KW-1003">Cell membrane</keyword>
<keyword id="KW-1015">Disulfide bond</keyword>
<keyword id="KW-0297">G-protein coupled receptor</keyword>
<keyword id="KW-0325">Glycoprotein</keyword>
<keyword id="KW-0472">Membrane</keyword>
<keyword id="KW-0597">Phosphoprotein</keyword>
<keyword id="KW-0675">Receptor</keyword>
<keyword id="KW-1185">Reference proteome</keyword>
<keyword id="KW-0732">Signal</keyword>
<keyword id="KW-0807">Transducer</keyword>
<keyword id="KW-0812">Transmembrane</keyword>
<keyword id="KW-1133">Transmembrane helix</keyword>
<accession>Q95L55</accession>
<name>EDNRA_SHEEP</name>
<reference key="1">
    <citation type="submission" date="2001-09" db="EMBL/GenBank/DDBJ databases">
        <title>Developmental regulation of pulmonary vascular endothelin A receptor.</title>
        <authorList>
            <person name="Linden B.C."/>
            <person name="Resnik E.R."/>
            <person name="Cornfield D.N."/>
        </authorList>
    </citation>
    <scope>NUCLEOTIDE SEQUENCE [MRNA]</scope>
</reference>
<evidence type="ECO:0000250" key="1"/>
<evidence type="ECO:0000250" key="2">
    <source>
        <dbReference type="UniProtKB" id="P25101"/>
    </source>
</evidence>
<evidence type="ECO:0000250" key="3">
    <source>
        <dbReference type="UniProtKB" id="P28088"/>
    </source>
</evidence>
<evidence type="ECO:0000255" key="4"/>
<evidence type="ECO:0000255" key="5">
    <source>
        <dbReference type="PROSITE-ProRule" id="PRU00521"/>
    </source>
</evidence>
<evidence type="ECO:0000256" key="6">
    <source>
        <dbReference type="SAM" id="MobiDB-lite"/>
    </source>
</evidence>
<evidence type="ECO:0000305" key="7"/>
<dbReference type="EMBL" id="AF416703">
    <property type="protein sequence ID" value="AAL08564.1"/>
    <property type="molecule type" value="mRNA"/>
</dbReference>
<dbReference type="RefSeq" id="NP_001009433.1">
    <property type="nucleotide sequence ID" value="NM_001009433.1"/>
</dbReference>
<dbReference type="SMR" id="Q95L55"/>
<dbReference type="STRING" id="9940.ENSOARP00000008763"/>
<dbReference type="GlyCosmos" id="Q95L55">
    <property type="glycosylation" value="2 sites, No reported glycans"/>
</dbReference>
<dbReference type="PaxDb" id="9940-ENSOARP00000008763"/>
<dbReference type="GeneID" id="443465"/>
<dbReference type="KEGG" id="oas:443465"/>
<dbReference type="CTD" id="1909"/>
<dbReference type="eggNOG" id="KOG3656">
    <property type="taxonomic scope" value="Eukaryota"/>
</dbReference>
<dbReference type="OrthoDB" id="10049706at2759"/>
<dbReference type="Proteomes" id="UP000002356">
    <property type="component" value="Unplaced"/>
</dbReference>
<dbReference type="GO" id="GO:0005886">
    <property type="term" value="C:plasma membrane"/>
    <property type="evidence" value="ECO:0007669"/>
    <property type="project" value="UniProtKB-SubCell"/>
</dbReference>
<dbReference type="GO" id="GO:0004962">
    <property type="term" value="F:endothelin receptor activity"/>
    <property type="evidence" value="ECO:0007669"/>
    <property type="project" value="InterPro"/>
</dbReference>
<dbReference type="GO" id="GO:0048066">
    <property type="term" value="P:developmental pigmentation"/>
    <property type="evidence" value="ECO:0007669"/>
    <property type="project" value="TreeGrafter"/>
</dbReference>
<dbReference type="GO" id="GO:0048484">
    <property type="term" value="P:enteric nervous system development"/>
    <property type="evidence" value="ECO:0007669"/>
    <property type="project" value="InterPro"/>
</dbReference>
<dbReference type="GO" id="GO:0008217">
    <property type="term" value="P:regulation of blood pressure"/>
    <property type="evidence" value="ECO:0007669"/>
    <property type="project" value="InterPro"/>
</dbReference>
<dbReference type="GO" id="GO:0042310">
    <property type="term" value="P:vasoconstriction"/>
    <property type="evidence" value="ECO:0007669"/>
    <property type="project" value="InterPro"/>
</dbReference>
<dbReference type="CDD" id="cd15975">
    <property type="entry name" value="7tmA_ET-AR"/>
    <property type="match status" value="1"/>
</dbReference>
<dbReference type="FunFam" id="1.20.1070.10:FF:000076">
    <property type="entry name" value="Endothelin receptor type B"/>
    <property type="match status" value="1"/>
</dbReference>
<dbReference type="Gene3D" id="1.20.1070.10">
    <property type="entry name" value="Rhodopsin 7-helix transmembrane proteins"/>
    <property type="match status" value="1"/>
</dbReference>
<dbReference type="InterPro" id="IPR000499">
    <property type="entry name" value="Endthln_rcpt"/>
</dbReference>
<dbReference type="InterPro" id="IPR002175">
    <property type="entry name" value="ETA_rcpt"/>
</dbReference>
<dbReference type="InterPro" id="IPR051193">
    <property type="entry name" value="GPCR_endothelin_rcpt"/>
</dbReference>
<dbReference type="InterPro" id="IPR000276">
    <property type="entry name" value="GPCR_Rhodpsn"/>
</dbReference>
<dbReference type="InterPro" id="IPR017452">
    <property type="entry name" value="GPCR_Rhodpsn_7TM"/>
</dbReference>
<dbReference type="PANTHER" id="PTHR46099:SF2">
    <property type="entry name" value="ENDOTHELIN-1 RECEPTOR"/>
    <property type="match status" value="1"/>
</dbReference>
<dbReference type="PANTHER" id="PTHR46099">
    <property type="entry name" value="G_PROTEIN_RECEP_F1_2 DOMAIN-CONTAINING PROTEIN"/>
    <property type="match status" value="1"/>
</dbReference>
<dbReference type="Pfam" id="PF00001">
    <property type="entry name" value="7tm_1"/>
    <property type="match status" value="1"/>
</dbReference>
<dbReference type="PRINTS" id="PR00570">
    <property type="entry name" value="ENDOTHELINAR"/>
</dbReference>
<dbReference type="PRINTS" id="PR00366">
    <property type="entry name" value="ENDOTHELINR"/>
</dbReference>
<dbReference type="PRINTS" id="PR00237">
    <property type="entry name" value="GPCRRHODOPSN"/>
</dbReference>
<dbReference type="SUPFAM" id="SSF81321">
    <property type="entry name" value="Family A G protein-coupled receptor-like"/>
    <property type="match status" value="1"/>
</dbReference>
<dbReference type="PROSITE" id="PS00237">
    <property type="entry name" value="G_PROTEIN_RECEP_F1_1"/>
    <property type="match status" value="1"/>
</dbReference>
<dbReference type="PROSITE" id="PS50262">
    <property type="entry name" value="G_PROTEIN_RECEP_F1_2"/>
    <property type="match status" value="1"/>
</dbReference>
<organism>
    <name type="scientific">Ovis aries</name>
    <name type="common">Sheep</name>
    <dbReference type="NCBI Taxonomy" id="9940"/>
    <lineage>
        <taxon>Eukaryota</taxon>
        <taxon>Metazoa</taxon>
        <taxon>Chordata</taxon>
        <taxon>Craniata</taxon>
        <taxon>Vertebrata</taxon>
        <taxon>Euteleostomi</taxon>
        <taxon>Mammalia</taxon>
        <taxon>Eutheria</taxon>
        <taxon>Laurasiatheria</taxon>
        <taxon>Artiodactyla</taxon>
        <taxon>Ruminantia</taxon>
        <taxon>Pecora</taxon>
        <taxon>Bovidae</taxon>
        <taxon>Caprinae</taxon>
        <taxon>Ovis</taxon>
    </lineage>
</organism>